<feature type="chain" id="PRO_1000073906" description="Endoribonuclease YbeY">
    <location>
        <begin position="1"/>
        <end position="158"/>
    </location>
</feature>
<feature type="binding site" evidence="1">
    <location>
        <position position="117"/>
    </location>
    <ligand>
        <name>Zn(2+)</name>
        <dbReference type="ChEBI" id="CHEBI:29105"/>
        <note>catalytic</note>
    </ligand>
</feature>
<feature type="binding site" evidence="1">
    <location>
        <position position="121"/>
    </location>
    <ligand>
        <name>Zn(2+)</name>
        <dbReference type="ChEBI" id="CHEBI:29105"/>
        <note>catalytic</note>
    </ligand>
</feature>
<feature type="binding site" evidence="1">
    <location>
        <position position="127"/>
    </location>
    <ligand>
        <name>Zn(2+)</name>
        <dbReference type="ChEBI" id="CHEBI:29105"/>
        <note>catalytic</note>
    </ligand>
</feature>
<name>YBEY_FRAP2</name>
<evidence type="ECO:0000255" key="1">
    <source>
        <dbReference type="HAMAP-Rule" id="MF_00009"/>
    </source>
</evidence>
<keyword id="KW-0963">Cytoplasm</keyword>
<keyword id="KW-0255">Endonuclease</keyword>
<keyword id="KW-0378">Hydrolase</keyword>
<keyword id="KW-0479">Metal-binding</keyword>
<keyword id="KW-0540">Nuclease</keyword>
<keyword id="KW-0690">Ribosome biogenesis</keyword>
<keyword id="KW-0698">rRNA processing</keyword>
<keyword id="KW-0862">Zinc</keyword>
<comment type="function">
    <text evidence="1">Single strand-specific metallo-endoribonuclease involved in late-stage 70S ribosome quality control and in maturation of the 3' terminus of the 16S rRNA.</text>
</comment>
<comment type="cofactor">
    <cofactor evidence="1">
        <name>Zn(2+)</name>
        <dbReference type="ChEBI" id="CHEBI:29105"/>
    </cofactor>
    <text evidence="1">Binds 1 zinc ion.</text>
</comment>
<comment type="subcellular location">
    <subcellularLocation>
        <location evidence="1">Cytoplasm</location>
    </subcellularLocation>
</comment>
<comment type="similarity">
    <text evidence="1">Belongs to the endoribonuclease YbeY family.</text>
</comment>
<reference key="1">
    <citation type="submission" date="2007-12" db="EMBL/GenBank/DDBJ databases">
        <title>Complete sequence of chromosome of Francisella philomiragia subsp. philomiragia ATCC 25017.</title>
        <authorList>
            <consortium name="US DOE Joint Genome Institute"/>
            <person name="Copeland A."/>
            <person name="Lucas S."/>
            <person name="Lapidus A."/>
            <person name="Barry K."/>
            <person name="Detter J.C."/>
            <person name="Glavina del Rio T."/>
            <person name="Hammon N."/>
            <person name="Israni S."/>
            <person name="Dalin E."/>
            <person name="Tice H."/>
            <person name="Pitluck S."/>
            <person name="Chain P."/>
            <person name="Malfatti S."/>
            <person name="Shin M."/>
            <person name="Vergez L."/>
            <person name="Schmutz J."/>
            <person name="Larimer F."/>
            <person name="Land M."/>
            <person name="Hauser L."/>
            <person name="Richardson P."/>
        </authorList>
    </citation>
    <scope>NUCLEOTIDE SEQUENCE [LARGE SCALE GENOMIC DNA]</scope>
    <source>
        <strain>ATCC 25017 / CCUG 19701 / FSC 153 / O#319-036</strain>
    </source>
</reference>
<protein>
    <recommendedName>
        <fullName evidence="1">Endoribonuclease YbeY</fullName>
        <ecNumber evidence="1">3.1.-.-</ecNumber>
    </recommendedName>
</protein>
<accession>B0TXS6</accession>
<dbReference type="EC" id="3.1.-.-" evidence="1"/>
<dbReference type="EMBL" id="CP000937">
    <property type="protein sequence ID" value="ABZ86245.1"/>
    <property type="molecule type" value="Genomic_DNA"/>
</dbReference>
<dbReference type="SMR" id="B0TXS6"/>
<dbReference type="KEGG" id="fph:Fphi_0025"/>
<dbReference type="eggNOG" id="COG0319">
    <property type="taxonomic scope" value="Bacteria"/>
</dbReference>
<dbReference type="HOGENOM" id="CLU_106710_3_3_6"/>
<dbReference type="GO" id="GO:0005737">
    <property type="term" value="C:cytoplasm"/>
    <property type="evidence" value="ECO:0007669"/>
    <property type="project" value="UniProtKB-SubCell"/>
</dbReference>
<dbReference type="GO" id="GO:0004222">
    <property type="term" value="F:metalloendopeptidase activity"/>
    <property type="evidence" value="ECO:0007669"/>
    <property type="project" value="InterPro"/>
</dbReference>
<dbReference type="GO" id="GO:0004521">
    <property type="term" value="F:RNA endonuclease activity"/>
    <property type="evidence" value="ECO:0007669"/>
    <property type="project" value="UniProtKB-UniRule"/>
</dbReference>
<dbReference type="GO" id="GO:0008270">
    <property type="term" value="F:zinc ion binding"/>
    <property type="evidence" value="ECO:0007669"/>
    <property type="project" value="UniProtKB-UniRule"/>
</dbReference>
<dbReference type="GO" id="GO:0006364">
    <property type="term" value="P:rRNA processing"/>
    <property type="evidence" value="ECO:0007669"/>
    <property type="project" value="UniProtKB-UniRule"/>
</dbReference>
<dbReference type="Gene3D" id="3.40.390.30">
    <property type="entry name" value="Metalloproteases ('zincins'), catalytic domain"/>
    <property type="match status" value="1"/>
</dbReference>
<dbReference type="HAMAP" id="MF_00009">
    <property type="entry name" value="Endoribonucl_YbeY"/>
    <property type="match status" value="1"/>
</dbReference>
<dbReference type="InterPro" id="IPR023091">
    <property type="entry name" value="MetalPrtase_cat_dom_sf_prd"/>
</dbReference>
<dbReference type="InterPro" id="IPR002036">
    <property type="entry name" value="YbeY"/>
</dbReference>
<dbReference type="InterPro" id="IPR020549">
    <property type="entry name" value="YbeY_CS"/>
</dbReference>
<dbReference type="NCBIfam" id="TIGR00043">
    <property type="entry name" value="rRNA maturation RNase YbeY"/>
    <property type="match status" value="1"/>
</dbReference>
<dbReference type="PANTHER" id="PTHR46986">
    <property type="entry name" value="ENDORIBONUCLEASE YBEY, CHLOROPLASTIC"/>
    <property type="match status" value="1"/>
</dbReference>
<dbReference type="PANTHER" id="PTHR46986:SF1">
    <property type="entry name" value="ENDORIBONUCLEASE YBEY, CHLOROPLASTIC"/>
    <property type="match status" value="1"/>
</dbReference>
<dbReference type="Pfam" id="PF02130">
    <property type="entry name" value="YbeY"/>
    <property type="match status" value="1"/>
</dbReference>
<dbReference type="SUPFAM" id="SSF55486">
    <property type="entry name" value="Metalloproteases ('zincins'), catalytic domain"/>
    <property type="match status" value="1"/>
</dbReference>
<dbReference type="PROSITE" id="PS01306">
    <property type="entry name" value="UPF0054"/>
    <property type="match status" value="1"/>
</dbReference>
<organism>
    <name type="scientific">Francisella philomiragia subsp. philomiragia (strain ATCC 25017 / CCUG 19701 / FSC 153 / O#319-036)</name>
    <dbReference type="NCBI Taxonomy" id="484022"/>
    <lineage>
        <taxon>Bacteria</taxon>
        <taxon>Pseudomonadati</taxon>
        <taxon>Pseudomonadota</taxon>
        <taxon>Gammaproteobacteria</taxon>
        <taxon>Thiotrichales</taxon>
        <taxon>Francisellaceae</taxon>
        <taxon>Francisella</taxon>
    </lineage>
</organism>
<sequence length="158" mass="18197">MDSLNLNVINDDEHPIPNQDLLEKCFALVADKHNISQAEVNVSIVSNQEIQQINKQFRHKDKPTNIISFEFEKPEGLPEDIAANFWGDIVIAPEVLKKEAKEQNKNLDDHWQHIFIHGLLHLLGYDHIDDIEAEEMENLEIELLAELGIANPYIEQEN</sequence>
<proteinExistence type="inferred from homology"/>
<gene>
    <name evidence="1" type="primary">ybeY</name>
    <name type="ordered locus">Fphi_0025</name>
</gene>